<comment type="similarity">
    <text evidence="1">Belongs to the UPF0262 family.</text>
</comment>
<reference key="1">
    <citation type="submission" date="2006-09" db="EMBL/GenBank/DDBJ databases">
        <title>Complete sequence of Rhodopseudomonas palustris BisA53.</title>
        <authorList>
            <consortium name="US DOE Joint Genome Institute"/>
            <person name="Copeland A."/>
            <person name="Lucas S."/>
            <person name="Lapidus A."/>
            <person name="Barry K."/>
            <person name="Detter J.C."/>
            <person name="Glavina del Rio T."/>
            <person name="Hammon N."/>
            <person name="Israni S."/>
            <person name="Dalin E."/>
            <person name="Tice H."/>
            <person name="Pitluck S."/>
            <person name="Chain P."/>
            <person name="Malfatti S."/>
            <person name="Shin M."/>
            <person name="Vergez L."/>
            <person name="Schmutz J."/>
            <person name="Larimer F."/>
            <person name="Land M."/>
            <person name="Hauser L."/>
            <person name="Pelletier D.A."/>
            <person name="Kyrpides N."/>
            <person name="Kim E."/>
            <person name="Harwood C.S."/>
            <person name="Oda Y."/>
            <person name="Richardson P."/>
        </authorList>
    </citation>
    <scope>NUCLEOTIDE SEQUENCE [LARGE SCALE GENOMIC DNA]</scope>
    <source>
        <strain>BisA53</strain>
    </source>
</reference>
<evidence type="ECO:0000255" key="1">
    <source>
        <dbReference type="HAMAP-Rule" id="MF_00678"/>
    </source>
</evidence>
<accession>Q07I30</accession>
<feature type="chain" id="PRO_0000314211" description="UPF0262 protein RPE_4483">
    <location>
        <begin position="1"/>
        <end position="163"/>
    </location>
</feature>
<organism>
    <name type="scientific">Rhodopseudomonas palustris (strain BisA53)</name>
    <dbReference type="NCBI Taxonomy" id="316055"/>
    <lineage>
        <taxon>Bacteria</taxon>
        <taxon>Pseudomonadati</taxon>
        <taxon>Pseudomonadota</taxon>
        <taxon>Alphaproteobacteria</taxon>
        <taxon>Hyphomicrobiales</taxon>
        <taxon>Nitrobacteraceae</taxon>
        <taxon>Rhodopseudomonas</taxon>
    </lineage>
</organism>
<proteinExistence type="inferred from homology"/>
<sequence>MTTAAPDDSKNCIVAVTLDEESIGRSGPDIEHERAIAIYDLVEKNLFAPEGASEGPFTLHLGITGNRLMFDIRREDGTPVVAHLLSLSPFRRIVKDYFMICDSYYQAIRTATPDKIEAIDMGRRGIHDEGSRTLQERLAGKVRIDFETARRLFTLISVLHWKG</sequence>
<gene>
    <name type="ordered locus">RPE_4483</name>
</gene>
<dbReference type="EMBL" id="CP000463">
    <property type="protein sequence ID" value="ABJ08404.1"/>
    <property type="molecule type" value="Genomic_DNA"/>
</dbReference>
<dbReference type="STRING" id="316055.RPE_4483"/>
<dbReference type="KEGG" id="rpe:RPE_4483"/>
<dbReference type="eggNOG" id="COG5328">
    <property type="taxonomic scope" value="Bacteria"/>
</dbReference>
<dbReference type="HOGENOM" id="CLU_112904_0_0_5"/>
<dbReference type="OrthoDB" id="9798434at2"/>
<dbReference type="HAMAP" id="MF_00678">
    <property type="entry name" value="UPF0262"/>
    <property type="match status" value="1"/>
</dbReference>
<dbReference type="InterPro" id="IPR008321">
    <property type="entry name" value="UCP032146"/>
</dbReference>
<dbReference type="NCBIfam" id="NF002769">
    <property type="entry name" value="PRK02853.1"/>
    <property type="match status" value="1"/>
</dbReference>
<dbReference type="Pfam" id="PF06793">
    <property type="entry name" value="UPF0262"/>
    <property type="match status" value="1"/>
</dbReference>
<dbReference type="PIRSF" id="PIRSF032146">
    <property type="entry name" value="UCP032146"/>
    <property type="match status" value="1"/>
</dbReference>
<protein>
    <recommendedName>
        <fullName evidence="1">UPF0262 protein RPE_4483</fullName>
    </recommendedName>
</protein>
<name>Y4483_RHOP5</name>